<sequence length="330" mass="35899">MQTLAQHLTSQAVNDSLSHLILTLADTSKAISHAVRHGALAGVLGATEQENVQGETQKKLDIITNDMLKDALKADGTVRGLASEEEDHVVEVSQNGQYLVCFDPLDGSSNIDINSLVGTIFSVLPAPAGELTETSFLQSGRAQLAAGYVLYGPSTMLALTTGQGVQLFTLHPETNEFLLTNAAMSISPDTQEFAINMSNQRFWEAPMQTYIADLLLGKIGPREKSFNMRWIAAMVGDVHRVLSRGGIFTYPTDNKDPKKPYKLRLMYEANPMAFLVEQAGGKASTGYETILDITPTHIHQRVAVILGSSNEVDACLSYHGIDYSEEPNIE</sequence>
<reference key="1">
    <citation type="submission" date="2007-07" db="EMBL/GenBank/DDBJ databases">
        <title>Complete sequence of chromosome of Shewanella baltica OS185.</title>
        <authorList>
            <consortium name="US DOE Joint Genome Institute"/>
            <person name="Copeland A."/>
            <person name="Lucas S."/>
            <person name="Lapidus A."/>
            <person name="Barry K."/>
            <person name="Glavina del Rio T."/>
            <person name="Dalin E."/>
            <person name="Tice H."/>
            <person name="Pitluck S."/>
            <person name="Sims D."/>
            <person name="Brettin T."/>
            <person name="Bruce D."/>
            <person name="Detter J.C."/>
            <person name="Han C."/>
            <person name="Schmutz J."/>
            <person name="Larimer F."/>
            <person name="Land M."/>
            <person name="Hauser L."/>
            <person name="Kyrpides N."/>
            <person name="Mikhailova N."/>
            <person name="Brettar I."/>
            <person name="Rodrigues J."/>
            <person name="Konstantinidis K."/>
            <person name="Tiedje J."/>
            <person name="Richardson P."/>
        </authorList>
    </citation>
    <scope>NUCLEOTIDE SEQUENCE [LARGE SCALE GENOMIC DNA]</scope>
    <source>
        <strain>OS185</strain>
    </source>
</reference>
<feature type="chain" id="PRO_0000364701" description="Fructose-1,6-bisphosphatase class 1">
    <location>
        <begin position="1"/>
        <end position="330"/>
    </location>
</feature>
<feature type="binding site" evidence="1">
    <location>
        <position position="84"/>
    </location>
    <ligand>
        <name>Mg(2+)</name>
        <dbReference type="ChEBI" id="CHEBI:18420"/>
        <label>1</label>
    </ligand>
</feature>
<feature type="binding site" evidence="1">
    <location>
        <position position="103"/>
    </location>
    <ligand>
        <name>Mg(2+)</name>
        <dbReference type="ChEBI" id="CHEBI:18420"/>
        <label>1</label>
    </ligand>
</feature>
<feature type="binding site" evidence="1">
    <location>
        <position position="103"/>
    </location>
    <ligand>
        <name>Mg(2+)</name>
        <dbReference type="ChEBI" id="CHEBI:18420"/>
        <label>2</label>
    </ligand>
</feature>
<feature type="binding site" evidence="1">
    <location>
        <position position="105"/>
    </location>
    <ligand>
        <name>Mg(2+)</name>
        <dbReference type="ChEBI" id="CHEBI:18420"/>
        <label>1</label>
    </ligand>
</feature>
<feature type="binding site" evidence="1">
    <location>
        <begin position="106"/>
        <end position="109"/>
    </location>
    <ligand>
        <name>substrate</name>
    </ligand>
</feature>
<feature type="binding site" evidence="1">
    <location>
        <position position="106"/>
    </location>
    <ligand>
        <name>Mg(2+)</name>
        <dbReference type="ChEBI" id="CHEBI:18420"/>
        <label>2</label>
    </ligand>
</feature>
<feature type="binding site" evidence="1">
    <location>
        <position position="196"/>
    </location>
    <ligand>
        <name>substrate</name>
    </ligand>
</feature>
<feature type="binding site" evidence="1">
    <location>
        <position position="262"/>
    </location>
    <ligand>
        <name>substrate</name>
    </ligand>
</feature>
<feature type="binding site" evidence="1">
    <location>
        <position position="268"/>
    </location>
    <ligand>
        <name>Mg(2+)</name>
        <dbReference type="ChEBI" id="CHEBI:18420"/>
        <label>2</label>
    </ligand>
</feature>
<keyword id="KW-0119">Carbohydrate metabolism</keyword>
<keyword id="KW-0963">Cytoplasm</keyword>
<keyword id="KW-0378">Hydrolase</keyword>
<keyword id="KW-0460">Magnesium</keyword>
<keyword id="KW-0479">Metal-binding</keyword>
<evidence type="ECO:0000255" key="1">
    <source>
        <dbReference type="HAMAP-Rule" id="MF_01855"/>
    </source>
</evidence>
<protein>
    <recommendedName>
        <fullName evidence="1">Fructose-1,6-bisphosphatase class 1</fullName>
        <shortName evidence="1">FBPase class 1</shortName>
        <ecNumber evidence="1">3.1.3.11</ecNumber>
    </recommendedName>
    <alternativeName>
        <fullName evidence="1">D-fructose-1,6-bisphosphate 1-phosphohydrolase class 1</fullName>
    </alternativeName>
</protein>
<gene>
    <name evidence="1" type="primary">fbp</name>
    <name type="ordered locus">Shew185_3721</name>
</gene>
<organism>
    <name type="scientific">Shewanella baltica (strain OS185)</name>
    <dbReference type="NCBI Taxonomy" id="402882"/>
    <lineage>
        <taxon>Bacteria</taxon>
        <taxon>Pseudomonadati</taxon>
        <taxon>Pseudomonadota</taxon>
        <taxon>Gammaproteobacteria</taxon>
        <taxon>Alteromonadales</taxon>
        <taxon>Shewanellaceae</taxon>
        <taxon>Shewanella</taxon>
    </lineage>
</organism>
<accession>A6WSQ6</accession>
<proteinExistence type="inferred from homology"/>
<dbReference type="EC" id="3.1.3.11" evidence="1"/>
<dbReference type="EMBL" id="CP000753">
    <property type="protein sequence ID" value="ABS09845.1"/>
    <property type="molecule type" value="Genomic_DNA"/>
</dbReference>
<dbReference type="RefSeq" id="WP_012090231.1">
    <property type="nucleotide sequence ID" value="NC_009665.1"/>
</dbReference>
<dbReference type="SMR" id="A6WSQ6"/>
<dbReference type="KEGG" id="sbm:Shew185_3721"/>
<dbReference type="HOGENOM" id="CLU_039977_0_0_6"/>
<dbReference type="UniPathway" id="UPA00138"/>
<dbReference type="GO" id="GO:0005829">
    <property type="term" value="C:cytosol"/>
    <property type="evidence" value="ECO:0007669"/>
    <property type="project" value="TreeGrafter"/>
</dbReference>
<dbReference type="GO" id="GO:0042132">
    <property type="term" value="F:fructose 1,6-bisphosphate 1-phosphatase activity"/>
    <property type="evidence" value="ECO:0007669"/>
    <property type="project" value="UniProtKB-UniRule"/>
</dbReference>
<dbReference type="GO" id="GO:0000287">
    <property type="term" value="F:magnesium ion binding"/>
    <property type="evidence" value="ECO:0007669"/>
    <property type="project" value="UniProtKB-UniRule"/>
</dbReference>
<dbReference type="GO" id="GO:0030388">
    <property type="term" value="P:fructose 1,6-bisphosphate metabolic process"/>
    <property type="evidence" value="ECO:0007669"/>
    <property type="project" value="TreeGrafter"/>
</dbReference>
<dbReference type="GO" id="GO:0006002">
    <property type="term" value="P:fructose 6-phosphate metabolic process"/>
    <property type="evidence" value="ECO:0007669"/>
    <property type="project" value="TreeGrafter"/>
</dbReference>
<dbReference type="GO" id="GO:0006000">
    <property type="term" value="P:fructose metabolic process"/>
    <property type="evidence" value="ECO:0007669"/>
    <property type="project" value="TreeGrafter"/>
</dbReference>
<dbReference type="GO" id="GO:0006094">
    <property type="term" value="P:gluconeogenesis"/>
    <property type="evidence" value="ECO:0007669"/>
    <property type="project" value="UniProtKB-UniRule"/>
</dbReference>
<dbReference type="GO" id="GO:0005986">
    <property type="term" value="P:sucrose biosynthetic process"/>
    <property type="evidence" value="ECO:0007669"/>
    <property type="project" value="TreeGrafter"/>
</dbReference>
<dbReference type="CDD" id="cd00354">
    <property type="entry name" value="FBPase"/>
    <property type="match status" value="1"/>
</dbReference>
<dbReference type="FunFam" id="3.30.540.10:FF:000006">
    <property type="entry name" value="Fructose-1,6-bisphosphatase class 1"/>
    <property type="match status" value="1"/>
</dbReference>
<dbReference type="FunFam" id="3.40.190.80:FF:000011">
    <property type="entry name" value="Fructose-1,6-bisphosphatase class 1"/>
    <property type="match status" value="1"/>
</dbReference>
<dbReference type="Gene3D" id="3.40.190.80">
    <property type="match status" value="1"/>
</dbReference>
<dbReference type="Gene3D" id="3.30.540.10">
    <property type="entry name" value="Fructose-1,6-Bisphosphatase, subunit A, domain 1"/>
    <property type="match status" value="1"/>
</dbReference>
<dbReference type="HAMAP" id="MF_01855">
    <property type="entry name" value="FBPase_class1"/>
    <property type="match status" value="1"/>
</dbReference>
<dbReference type="InterPro" id="IPR044015">
    <property type="entry name" value="FBPase_C_dom"/>
</dbReference>
<dbReference type="InterPro" id="IPR000146">
    <property type="entry name" value="FBPase_class-1"/>
</dbReference>
<dbReference type="InterPro" id="IPR033391">
    <property type="entry name" value="FBPase_N"/>
</dbReference>
<dbReference type="InterPro" id="IPR028343">
    <property type="entry name" value="FBPtase"/>
</dbReference>
<dbReference type="NCBIfam" id="NF006779">
    <property type="entry name" value="PRK09293.1-3"/>
    <property type="match status" value="1"/>
</dbReference>
<dbReference type="NCBIfam" id="NF006780">
    <property type="entry name" value="PRK09293.1-4"/>
    <property type="match status" value="1"/>
</dbReference>
<dbReference type="PANTHER" id="PTHR11556">
    <property type="entry name" value="FRUCTOSE-1,6-BISPHOSPHATASE-RELATED"/>
    <property type="match status" value="1"/>
</dbReference>
<dbReference type="PANTHER" id="PTHR11556:SF35">
    <property type="entry name" value="SEDOHEPTULOSE-1,7-BISPHOSPHATASE, CHLOROPLASTIC"/>
    <property type="match status" value="1"/>
</dbReference>
<dbReference type="Pfam" id="PF00316">
    <property type="entry name" value="FBPase"/>
    <property type="match status" value="1"/>
</dbReference>
<dbReference type="Pfam" id="PF18913">
    <property type="entry name" value="FBPase_C"/>
    <property type="match status" value="1"/>
</dbReference>
<dbReference type="PIRSF" id="PIRSF500210">
    <property type="entry name" value="FBPtase"/>
    <property type="match status" value="1"/>
</dbReference>
<dbReference type="PIRSF" id="PIRSF000904">
    <property type="entry name" value="FBPtase_SBPase"/>
    <property type="match status" value="1"/>
</dbReference>
<dbReference type="PRINTS" id="PR00115">
    <property type="entry name" value="F16BPHPHTASE"/>
</dbReference>
<dbReference type="SUPFAM" id="SSF56655">
    <property type="entry name" value="Carbohydrate phosphatase"/>
    <property type="match status" value="1"/>
</dbReference>
<comment type="catalytic activity">
    <reaction evidence="1">
        <text>beta-D-fructose 1,6-bisphosphate + H2O = beta-D-fructose 6-phosphate + phosphate</text>
        <dbReference type="Rhea" id="RHEA:11064"/>
        <dbReference type="ChEBI" id="CHEBI:15377"/>
        <dbReference type="ChEBI" id="CHEBI:32966"/>
        <dbReference type="ChEBI" id="CHEBI:43474"/>
        <dbReference type="ChEBI" id="CHEBI:57634"/>
        <dbReference type="EC" id="3.1.3.11"/>
    </reaction>
</comment>
<comment type="cofactor">
    <cofactor evidence="1">
        <name>Mg(2+)</name>
        <dbReference type="ChEBI" id="CHEBI:18420"/>
    </cofactor>
    <text evidence="1">Binds 2 magnesium ions per subunit.</text>
</comment>
<comment type="pathway">
    <text evidence="1">Carbohydrate biosynthesis; gluconeogenesis.</text>
</comment>
<comment type="subunit">
    <text evidence="1">Homotetramer.</text>
</comment>
<comment type="subcellular location">
    <subcellularLocation>
        <location evidence="1">Cytoplasm</location>
    </subcellularLocation>
</comment>
<comment type="similarity">
    <text evidence="1">Belongs to the FBPase class 1 family.</text>
</comment>
<name>F16PA_SHEB8</name>